<feature type="chain" id="PRO_0000108648" description="Ribosomal RNA small subunit methyltransferase H">
    <location>
        <begin position="1"/>
        <end position="325"/>
    </location>
</feature>
<feature type="region of interest" description="Disordered" evidence="2">
    <location>
        <begin position="295"/>
        <end position="325"/>
    </location>
</feature>
<feature type="compositionally biased region" description="Basic and acidic residues" evidence="2">
    <location>
        <begin position="311"/>
        <end position="325"/>
    </location>
</feature>
<feature type="binding site" evidence="1">
    <location>
        <begin position="41"/>
        <end position="43"/>
    </location>
    <ligand>
        <name>S-adenosyl-L-methionine</name>
        <dbReference type="ChEBI" id="CHEBI:59789"/>
    </ligand>
</feature>
<feature type="binding site" evidence="1">
    <location>
        <position position="60"/>
    </location>
    <ligand>
        <name>S-adenosyl-L-methionine</name>
        <dbReference type="ChEBI" id="CHEBI:59789"/>
    </ligand>
</feature>
<feature type="binding site" evidence="1">
    <location>
        <position position="87"/>
    </location>
    <ligand>
        <name>S-adenosyl-L-methionine</name>
        <dbReference type="ChEBI" id="CHEBI:59789"/>
    </ligand>
</feature>
<feature type="binding site" evidence="1">
    <location>
        <position position="108"/>
    </location>
    <ligand>
        <name>S-adenosyl-L-methionine</name>
        <dbReference type="ChEBI" id="CHEBI:59789"/>
    </ligand>
</feature>
<feature type="binding site" evidence="1">
    <location>
        <position position="115"/>
    </location>
    <ligand>
        <name>S-adenosyl-L-methionine</name>
        <dbReference type="ChEBI" id="CHEBI:59789"/>
    </ligand>
</feature>
<keyword id="KW-0963">Cytoplasm</keyword>
<keyword id="KW-0489">Methyltransferase</keyword>
<keyword id="KW-1185">Reference proteome</keyword>
<keyword id="KW-0698">rRNA processing</keyword>
<keyword id="KW-0949">S-adenosyl-L-methionine</keyword>
<keyword id="KW-0808">Transferase</keyword>
<sequence length="325" mass="35515">MSDDIHGDIHLPVLLERCIELLAPALQEPGAVIVDATLGMGGHSAGILARFPQATLVGLDRDPDALAIAGERLARFGDRVHLVHTVYDGIREALDGLGIAEVQGVLFDLGVSSLQLDRVERGFSYSKDAPLDMRMDGTSDLTAERVLAEYPEADLRRIFRDYGEEKLAARYAQRIVAARQQGPITRSGELVHLLQRATPAAIARQGHPAKRVFQALRIEVNQELAVLERALPAAVDALAVGGRLVVESYQSLEDRIVKRELQTRSRSSAPAGLPVELPEHRPELRLLIRGAELADDDEKAANPRAAPVRLRAAERTRASEDRRGS</sequence>
<dbReference type="EC" id="2.1.1.199" evidence="1"/>
<dbReference type="EMBL" id="AE016822">
    <property type="protein sequence ID" value="AAT89340.1"/>
    <property type="molecule type" value="Genomic_DNA"/>
</dbReference>
<dbReference type="RefSeq" id="WP_011186330.1">
    <property type="nucleotide sequence ID" value="NC_006087.1"/>
</dbReference>
<dbReference type="SMR" id="Q6AE56"/>
<dbReference type="STRING" id="281090.Lxx15340"/>
<dbReference type="KEGG" id="lxx:Lxx15340"/>
<dbReference type="eggNOG" id="COG0275">
    <property type="taxonomic scope" value="Bacteria"/>
</dbReference>
<dbReference type="HOGENOM" id="CLU_038422_0_0_11"/>
<dbReference type="Proteomes" id="UP000001306">
    <property type="component" value="Chromosome"/>
</dbReference>
<dbReference type="GO" id="GO:0005737">
    <property type="term" value="C:cytoplasm"/>
    <property type="evidence" value="ECO:0007669"/>
    <property type="project" value="UniProtKB-SubCell"/>
</dbReference>
<dbReference type="GO" id="GO:0071424">
    <property type="term" value="F:rRNA (cytosine-N4-)-methyltransferase activity"/>
    <property type="evidence" value="ECO:0007669"/>
    <property type="project" value="UniProtKB-UniRule"/>
</dbReference>
<dbReference type="GO" id="GO:0070475">
    <property type="term" value="P:rRNA base methylation"/>
    <property type="evidence" value="ECO:0007669"/>
    <property type="project" value="UniProtKB-UniRule"/>
</dbReference>
<dbReference type="Gene3D" id="1.10.150.170">
    <property type="entry name" value="Putative methyltransferase TM0872, insert domain"/>
    <property type="match status" value="1"/>
</dbReference>
<dbReference type="Gene3D" id="3.40.50.150">
    <property type="entry name" value="Vaccinia Virus protein VP39"/>
    <property type="match status" value="1"/>
</dbReference>
<dbReference type="HAMAP" id="MF_01007">
    <property type="entry name" value="16SrRNA_methyltr_H"/>
    <property type="match status" value="1"/>
</dbReference>
<dbReference type="InterPro" id="IPR002903">
    <property type="entry name" value="RsmH"/>
</dbReference>
<dbReference type="InterPro" id="IPR023397">
    <property type="entry name" value="SAM-dep_MeTrfase_MraW_recog"/>
</dbReference>
<dbReference type="InterPro" id="IPR029063">
    <property type="entry name" value="SAM-dependent_MTases_sf"/>
</dbReference>
<dbReference type="NCBIfam" id="TIGR00006">
    <property type="entry name" value="16S rRNA (cytosine(1402)-N(4))-methyltransferase RsmH"/>
    <property type="match status" value="1"/>
</dbReference>
<dbReference type="PANTHER" id="PTHR11265:SF0">
    <property type="entry name" value="12S RRNA N4-METHYLCYTIDINE METHYLTRANSFERASE"/>
    <property type="match status" value="1"/>
</dbReference>
<dbReference type="PANTHER" id="PTHR11265">
    <property type="entry name" value="S-ADENOSYL-METHYLTRANSFERASE MRAW"/>
    <property type="match status" value="1"/>
</dbReference>
<dbReference type="Pfam" id="PF01795">
    <property type="entry name" value="Methyltransf_5"/>
    <property type="match status" value="1"/>
</dbReference>
<dbReference type="PIRSF" id="PIRSF004486">
    <property type="entry name" value="MraW"/>
    <property type="match status" value="1"/>
</dbReference>
<dbReference type="SUPFAM" id="SSF81799">
    <property type="entry name" value="Putative methyltransferase TM0872, insert domain"/>
    <property type="match status" value="1"/>
</dbReference>
<dbReference type="SUPFAM" id="SSF53335">
    <property type="entry name" value="S-adenosyl-L-methionine-dependent methyltransferases"/>
    <property type="match status" value="1"/>
</dbReference>
<accession>Q6AE56</accession>
<evidence type="ECO:0000255" key="1">
    <source>
        <dbReference type="HAMAP-Rule" id="MF_01007"/>
    </source>
</evidence>
<evidence type="ECO:0000256" key="2">
    <source>
        <dbReference type="SAM" id="MobiDB-lite"/>
    </source>
</evidence>
<comment type="function">
    <text evidence="1">Specifically methylates the N4 position of cytidine in position 1402 (C1402) of 16S rRNA.</text>
</comment>
<comment type="catalytic activity">
    <reaction evidence="1">
        <text>cytidine(1402) in 16S rRNA + S-adenosyl-L-methionine = N(4)-methylcytidine(1402) in 16S rRNA + S-adenosyl-L-homocysteine + H(+)</text>
        <dbReference type="Rhea" id="RHEA:42928"/>
        <dbReference type="Rhea" id="RHEA-COMP:10286"/>
        <dbReference type="Rhea" id="RHEA-COMP:10287"/>
        <dbReference type="ChEBI" id="CHEBI:15378"/>
        <dbReference type="ChEBI" id="CHEBI:57856"/>
        <dbReference type="ChEBI" id="CHEBI:59789"/>
        <dbReference type="ChEBI" id="CHEBI:74506"/>
        <dbReference type="ChEBI" id="CHEBI:82748"/>
        <dbReference type="EC" id="2.1.1.199"/>
    </reaction>
</comment>
<comment type="subcellular location">
    <subcellularLocation>
        <location evidence="1">Cytoplasm</location>
    </subcellularLocation>
</comment>
<comment type="similarity">
    <text evidence="1">Belongs to the methyltransferase superfamily. RsmH family.</text>
</comment>
<protein>
    <recommendedName>
        <fullName evidence="1">Ribosomal RNA small subunit methyltransferase H</fullName>
        <ecNumber evidence="1">2.1.1.199</ecNumber>
    </recommendedName>
    <alternativeName>
        <fullName evidence="1">16S rRNA m(4)C1402 methyltransferase</fullName>
    </alternativeName>
    <alternativeName>
        <fullName evidence="1">rRNA (cytosine-N(4)-)-methyltransferase RsmH</fullName>
    </alternativeName>
</protein>
<name>RSMH_LEIXX</name>
<gene>
    <name evidence="1" type="primary">rsmH</name>
    <name type="synonym">mraW</name>
    <name type="ordered locus">Lxx15340</name>
</gene>
<organism>
    <name type="scientific">Leifsonia xyli subsp. xyli (strain CTCB07)</name>
    <dbReference type="NCBI Taxonomy" id="281090"/>
    <lineage>
        <taxon>Bacteria</taxon>
        <taxon>Bacillati</taxon>
        <taxon>Actinomycetota</taxon>
        <taxon>Actinomycetes</taxon>
        <taxon>Micrococcales</taxon>
        <taxon>Microbacteriaceae</taxon>
        <taxon>Leifsonia</taxon>
    </lineage>
</organism>
<proteinExistence type="inferred from homology"/>
<reference key="1">
    <citation type="journal article" date="2004" name="Mol. Plant Microbe Interact.">
        <title>The genome sequence of the Gram-positive sugarcane pathogen Leifsonia xyli subsp. xyli.</title>
        <authorList>
            <person name="Monteiro-Vitorello C.B."/>
            <person name="Camargo L.E.A."/>
            <person name="Van Sluys M.A."/>
            <person name="Kitajima J.P."/>
            <person name="Truffi D."/>
            <person name="do Amaral A.M."/>
            <person name="Harakava R."/>
            <person name="de Oliveira J.C.F."/>
            <person name="Wood D."/>
            <person name="de Oliveira M.C."/>
            <person name="Miyaki C.Y."/>
            <person name="Takita M.A."/>
            <person name="da Silva A.C.R."/>
            <person name="Furlan L.R."/>
            <person name="Carraro D.M."/>
            <person name="Camarotte G."/>
            <person name="Almeida N.F. Jr."/>
            <person name="Carrer H."/>
            <person name="Coutinho L.L."/>
            <person name="El-Dorry H.A."/>
            <person name="Ferro M.I.T."/>
            <person name="Gagliardi P.R."/>
            <person name="Giglioti E."/>
            <person name="Goldman M.H.S."/>
            <person name="Goldman G.H."/>
            <person name="Kimura E.T."/>
            <person name="Ferro E.S."/>
            <person name="Kuramae E.E."/>
            <person name="Lemos E.G.M."/>
            <person name="Lemos M.V.F."/>
            <person name="Mauro S.M.Z."/>
            <person name="Machado M.A."/>
            <person name="Marino C.L."/>
            <person name="Menck C.F."/>
            <person name="Nunes L.R."/>
            <person name="Oliveira R.C."/>
            <person name="Pereira G.G."/>
            <person name="Siqueira W."/>
            <person name="de Souza A.A."/>
            <person name="Tsai S.M."/>
            <person name="Zanca A.S."/>
            <person name="Simpson A.J.G."/>
            <person name="Brumbley S.M."/>
            <person name="Setubal J.C."/>
        </authorList>
    </citation>
    <scope>NUCLEOTIDE SEQUENCE [LARGE SCALE GENOMIC DNA]</scope>
    <source>
        <strain>CTCB07</strain>
    </source>
</reference>